<feature type="chain" id="PRO_1000092404" description="Elongation factor 4">
    <location>
        <begin position="1"/>
        <end position="600"/>
    </location>
</feature>
<feature type="domain" description="tr-type G">
    <location>
        <begin position="4"/>
        <end position="186"/>
    </location>
</feature>
<feature type="binding site" evidence="1">
    <location>
        <begin position="16"/>
        <end position="21"/>
    </location>
    <ligand>
        <name>GTP</name>
        <dbReference type="ChEBI" id="CHEBI:37565"/>
    </ligand>
</feature>
<feature type="binding site" evidence="1">
    <location>
        <begin position="133"/>
        <end position="136"/>
    </location>
    <ligand>
        <name>GTP</name>
        <dbReference type="ChEBI" id="CHEBI:37565"/>
    </ligand>
</feature>
<comment type="function">
    <text evidence="1">Required for accurate and efficient protein synthesis under certain stress conditions. May act as a fidelity factor of the translation reaction, by catalyzing a one-codon backward translocation of tRNAs on improperly translocated ribosomes. Back-translocation proceeds from a post-translocation (POST) complex to a pre-translocation (PRE) complex, thus giving elongation factor G a second chance to translocate the tRNAs correctly. Binds to ribosomes in a GTP-dependent manner.</text>
</comment>
<comment type="catalytic activity">
    <reaction evidence="1">
        <text>GTP + H2O = GDP + phosphate + H(+)</text>
        <dbReference type="Rhea" id="RHEA:19669"/>
        <dbReference type="ChEBI" id="CHEBI:15377"/>
        <dbReference type="ChEBI" id="CHEBI:15378"/>
        <dbReference type="ChEBI" id="CHEBI:37565"/>
        <dbReference type="ChEBI" id="CHEBI:43474"/>
        <dbReference type="ChEBI" id="CHEBI:58189"/>
        <dbReference type="EC" id="3.6.5.n1"/>
    </reaction>
</comment>
<comment type="subcellular location">
    <subcellularLocation>
        <location evidence="1">Cell inner membrane</location>
        <topology evidence="1">Peripheral membrane protein</topology>
        <orientation evidence="1">Cytoplasmic side</orientation>
    </subcellularLocation>
</comment>
<comment type="similarity">
    <text evidence="1">Belongs to the TRAFAC class translation factor GTPase superfamily. Classic translation factor GTPase family. LepA subfamily.</text>
</comment>
<evidence type="ECO:0000255" key="1">
    <source>
        <dbReference type="HAMAP-Rule" id="MF_00071"/>
    </source>
</evidence>
<gene>
    <name evidence="1" type="primary">lepA</name>
    <name type="ordered locus">Glov_1620</name>
</gene>
<reference key="1">
    <citation type="submission" date="2008-05" db="EMBL/GenBank/DDBJ databases">
        <title>Complete sequence of chromosome of Geobacter lovleyi SZ.</title>
        <authorList>
            <consortium name="US DOE Joint Genome Institute"/>
            <person name="Lucas S."/>
            <person name="Copeland A."/>
            <person name="Lapidus A."/>
            <person name="Glavina del Rio T."/>
            <person name="Dalin E."/>
            <person name="Tice H."/>
            <person name="Bruce D."/>
            <person name="Goodwin L."/>
            <person name="Pitluck S."/>
            <person name="Chertkov O."/>
            <person name="Meincke L."/>
            <person name="Brettin T."/>
            <person name="Detter J.C."/>
            <person name="Han C."/>
            <person name="Tapia R."/>
            <person name="Kuske C.R."/>
            <person name="Schmutz J."/>
            <person name="Larimer F."/>
            <person name="Land M."/>
            <person name="Hauser L."/>
            <person name="Kyrpides N."/>
            <person name="Mikhailova N."/>
            <person name="Sung Y."/>
            <person name="Fletcher K.E."/>
            <person name="Ritalahti K.M."/>
            <person name="Loeffler F.E."/>
            <person name="Richardson P."/>
        </authorList>
    </citation>
    <scope>NUCLEOTIDE SEQUENCE [LARGE SCALE GENOMIC DNA]</scope>
    <source>
        <strain>ATCC BAA-1151 / DSM 17278 / SZ</strain>
    </source>
</reference>
<organism>
    <name type="scientific">Trichlorobacter lovleyi (strain ATCC BAA-1151 / DSM 17278 / SZ)</name>
    <name type="common">Geobacter lovleyi</name>
    <dbReference type="NCBI Taxonomy" id="398767"/>
    <lineage>
        <taxon>Bacteria</taxon>
        <taxon>Pseudomonadati</taxon>
        <taxon>Thermodesulfobacteriota</taxon>
        <taxon>Desulfuromonadia</taxon>
        <taxon>Geobacterales</taxon>
        <taxon>Geobacteraceae</taxon>
        <taxon>Trichlorobacter</taxon>
    </lineage>
</organism>
<name>LEPA_TRIL1</name>
<accession>B3E9R0</accession>
<sequence>MDISKIRNFSIIAHIDHGKSTLADRLLEYTGALTAREMQSQFLDKMDLERERGITIKAQTVRLNYTADDGNTYVLNLIDTPGHVDFTYEVSRSLAACEGGLLVVDASQGVEAQTLANVYLALDNDLEVFPVLNKIDLPAAEPERVKHEIEEIIGIDAHDAVLASAKEGIGTREILEEIVKKIPAPQGDVAAPLKALLFDSWYDQYQGVIILVRLFEGSLKKGDKIQLMSTNKAYEALKVGVFSPVMVEVPQLTAGEVGFVIAGIKDVADAKVGDTVTLLHRQCAEMLGGFKEVKPMVFSGLYPIDTAQYEQLRDALAKLKLNDSSFSFEPETSVALGFGFRCGFLGLLHMEIIQERLEREFGLDLITTAPTVVYRVHKMNGDVYSIQSANQMPELQSTEYLEEPFILAHIHVPNDYVGGVLALCEDKRGVQREIKYLTPTRVMIIYELPLNEIVLDFYDRLKSITKGYASLDYEHLEYRRSDLVRMNVLINGEVVDALSLILHRDKAYFRGRDLVSKMKELISRQMFEVAIQAAIGSKIIARETVKAMRKDVLAKCYGGDITRKRKLLEKQKEGKKRMKNVGNVELPQEAFLAILKVDDK</sequence>
<keyword id="KW-0997">Cell inner membrane</keyword>
<keyword id="KW-1003">Cell membrane</keyword>
<keyword id="KW-0342">GTP-binding</keyword>
<keyword id="KW-0378">Hydrolase</keyword>
<keyword id="KW-0472">Membrane</keyword>
<keyword id="KW-0547">Nucleotide-binding</keyword>
<keyword id="KW-0648">Protein biosynthesis</keyword>
<keyword id="KW-1185">Reference proteome</keyword>
<protein>
    <recommendedName>
        <fullName evidence="1">Elongation factor 4</fullName>
        <shortName evidence="1">EF-4</shortName>
        <ecNumber evidence="1">3.6.5.n1</ecNumber>
    </recommendedName>
    <alternativeName>
        <fullName evidence="1">Ribosomal back-translocase LepA</fullName>
    </alternativeName>
</protein>
<dbReference type="EC" id="3.6.5.n1" evidence="1"/>
<dbReference type="EMBL" id="CP001089">
    <property type="protein sequence ID" value="ACD95336.1"/>
    <property type="molecule type" value="Genomic_DNA"/>
</dbReference>
<dbReference type="RefSeq" id="WP_012469678.1">
    <property type="nucleotide sequence ID" value="NC_010814.1"/>
</dbReference>
<dbReference type="SMR" id="B3E9R0"/>
<dbReference type="STRING" id="398767.Glov_1620"/>
<dbReference type="KEGG" id="glo:Glov_1620"/>
<dbReference type="eggNOG" id="COG0481">
    <property type="taxonomic scope" value="Bacteria"/>
</dbReference>
<dbReference type="HOGENOM" id="CLU_009995_3_3_7"/>
<dbReference type="OrthoDB" id="9801591at2"/>
<dbReference type="Proteomes" id="UP000002420">
    <property type="component" value="Chromosome"/>
</dbReference>
<dbReference type="GO" id="GO:0005886">
    <property type="term" value="C:plasma membrane"/>
    <property type="evidence" value="ECO:0007669"/>
    <property type="project" value="UniProtKB-SubCell"/>
</dbReference>
<dbReference type="GO" id="GO:0005525">
    <property type="term" value="F:GTP binding"/>
    <property type="evidence" value="ECO:0007669"/>
    <property type="project" value="UniProtKB-UniRule"/>
</dbReference>
<dbReference type="GO" id="GO:0003924">
    <property type="term" value="F:GTPase activity"/>
    <property type="evidence" value="ECO:0007669"/>
    <property type="project" value="UniProtKB-UniRule"/>
</dbReference>
<dbReference type="GO" id="GO:0043022">
    <property type="term" value="F:ribosome binding"/>
    <property type="evidence" value="ECO:0007669"/>
    <property type="project" value="UniProtKB-UniRule"/>
</dbReference>
<dbReference type="GO" id="GO:0003746">
    <property type="term" value="F:translation elongation factor activity"/>
    <property type="evidence" value="ECO:0007669"/>
    <property type="project" value="UniProtKB-UniRule"/>
</dbReference>
<dbReference type="GO" id="GO:0045727">
    <property type="term" value="P:positive regulation of translation"/>
    <property type="evidence" value="ECO:0007669"/>
    <property type="project" value="UniProtKB-UniRule"/>
</dbReference>
<dbReference type="CDD" id="cd03699">
    <property type="entry name" value="EF4_II"/>
    <property type="match status" value="1"/>
</dbReference>
<dbReference type="CDD" id="cd16260">
    <property type="entry name" value="EF4_III"/>
    <property type="match status" value="1"/>
</dbReference>
<dbReference type="CDD" id="cd01890">
    <property type="entry name" value="LepA"/>
    <property type="match status" value="1"/>
</dbReference>
<dbReference type="CDD" id="cd03709">
    <property type="entry name" value="lepA_C"/>
    <property type="match status" value="1"/>
</dbReference>
<dbReference type="FunFam" id="3.40.50.300:FF:000078">
    <property type="entry name" value="Elongation factor 4"/>
    <property type="match status" value="1"/>
</dbReference>
<dbReference type="FunFam" id="2.40.30.10:FF:000015">
    <property type="entry name" value="Translation factor GUF1, mitochondrial"/>
    <property type="match status" value="1"/>
</dbReference>
<dbReference type="FunFam" id="3.30.70.240:FF:000007">
    <property type="entry name" value="Translation factor GUF1, mitochondrial"/>
    <property type="match status" value="1"/>
</dbReference>
<dbReference type="FunFam" id="3.30.70.2570:FF:000001">
    <property type="entry name" value="Translation factor GUF1, mitochondrial"/>
    <property type="match status" value="1"/>
</dbReference>
<dbReference type="FunFam" id="3.30.70.870:FF:000004">
    <property type="entry name" value="Translation factor GUF1, mitochondrial"/>
    <property type="match status" value="1"/>
</dbReference>
<dbReference type="Gene3D" id="3.30.70.240">
    <property type="match status" value="1"/>
</dbReference>
<dbReference type="Gene3D" id="3.30.70.2570">
    <property type="entry name" value="Elongation factor 4, C-terminal domain"/>
    <property type="match status" value="1"/>
</dbReference>
<dbReference type="Gene3D" id="3.30.70.870">
    <property type="entry name" value="Elongation Factor G (Translational Gtpase), domain 3"/>
    <property type="match status" value="1"/>
</dbReference>
<dbReference type="Gene3D" id="3.40.50.300">
    <property type="entry name" value="P-loop containing nucleotide triphosphate hydrolases"/>
    <property type="match status" value="1"/>
</dbReference>
<dbReference type="Gene3D" id="2.40.30.10">
    <property type="entry name" value="Translation factors"/>
    <property type="match status" value="1"/>
</dbReference>
<dbReference type="HAMAP" id="MF_00071">
    <property type="entry name" value="LepA"/>
    <property type="match status" value="1"/>
</dbReference>
<dbReference type="InterPro" id="IPR006297">
    <property type="entry name" value="EF-4"/>
</dbReference>
<dbReference type="InterPro" id="IPR035647">
    <property type="entry name" value="EFG_III/V"/>
</dbReference>
<dbReference type="InterPro" id="IPR000640">
    <property type="entry name" value="EFG_V-like"/>
</dbReference>
<dbReference type="InterPro" id="IPR004161">
    <property type="entry name" value="EFTu-like_2"/>
</dbReference>
<dbReference type="InterPro" id="IPR031157">
    <property type="entry name" value="G_TR_CS"/>
</dbReference>
<dbReference type="InterPro" id="IPR038363">
    <property type="entry name" value="LepA_C_sf"/>
</dbReference>
<dbReference type="InterPro" id="IPR013842">
    <property type="entry name" value="LepA_CTD"/>
</dbReference>
<dbReference type="InterPro" id="IPR035654">
    <property type="entry name" value="LepA_IV"/>
</dbReference>
<dbReference type="InterPro" id="IPR027417">
    <property type="entry name" value="P-loop_NTPase"/>
</dbReference>
<dbReference type="InterPro" id="IPR005225">
    <property type="entry name" value="Small_GTP-bd"/>
</dbReference>
<dbReference type="InterPro" id="IPR000795">
    <property type="entry name" value="T_Tr_GTP-bd_dom"/>
</dbReference>
<dbReference type="InterPro" id="IPR009000">
    <property type="entry name" value="Transl_B-barrel_sf"/>
</dbReference>
<dbReference type="NCBIfam" id="TIGR01393">
    <property type="entry name" value="lepA"/>
    <property type="match status" value="1"/>
</dbReference>
<dbReference type="NCBIfam" id="TIGR00231">
    <property type="entry name" value="small_GTP"/>
    <property type="match status" value="1"/>
</dbReference>
<dbReference type="PANTHER" id="PTHR43512:SF4">
    <property type="entry name" value="TRANSLATION FACTOR GUF1 HOMOLOG, CHLOROPLASTIC"/>
    <property type="match status" value="1"/>
</dbReference>
<dbReference type="PANTHER" id="PTHR43512">
    <property type="entry name" value="TRANSLATION FACTOR GUF1-RELATED"/>
    <property type="match status" value="1"/>
</dbReference>
<dbReference type="Pfam" id="PF00679">
    <property type="entry name" value="EFG_C"/>
    <property type="match status" value="1"/>
</dbReference>
<dbReference type="Pfam" id="PF00009">
    <property type="entry name" value="GTP_EFTU"/>
    <property type="match status" value="1"/>
</dbReference>
<dbReference type="Pfam" id="PF03144">
    <property type="entry name" value="GTP_EFTU_D2"/>
    <property type="match status" value="1"/>
</dbReference>
<dbReference type="Pfam" id="PF06421">
    <property type="entry name" value="LepA_C"/>
    <property type="match status" value="1"/>
</dbReference>
<dbReference type="PRINTS" id="PR00315">
    <property type="entry name" value="ELONGATNFCT"/>
</dbReference>
<dbReference type="SUPFAM" id="SSF54980">
    <property type="entry name" value="EF-G C-terminal domain-like"/>
    <property type="match status" value="2"/>
</dbReference>
<dbReference type="SUPFAM" id="SSF52540">
    <property type="entry name" value="P-loop containing nucleoside triphosphate hydrolases"/>
    <property type="match status" value="1"/>
</dbReference>
<dbReference type="SUPFAM" id="SSF50447">
    <property type="entry name" value="Translation proteins"/>
    <property type="match status" value="1"/>
</dbReference>
<dbReference type="PROSITE" id="PS00301">
    <property type="entry name" value="G_TR_1"/>
    <property type="match status" value="1"/>
</dbReference>
<dbReference type="PROSITE" id="PS51722">
    <property type="entry name" value="G_TR_2"/>
    <property type="match status" value="1"/>
</dbReference>
<proteinExistence type="inferred from homology"/>